<comment type="function">
    <text evidence="4 6 9">Catalyzes the covalent attachment of ubiquitin or ISG15 to other proteins. Functions in the E6/E6-AP-induced ubiquitination of p53/TP53. Promotes ubiquitination and subsequent proteasomal degradation of FLT3.</text>
</comment>
<comment type="catalytic activity">
    <reaction evidence="1 2">
        <text>S-ubiquitinyl-[E1 ubiquitin-activating enzyme]-L-cysteine + [E2 ubiquitin-conjugating enzyme]-L-cysteine = [E1 ubiquitin-activating enzyme]-L-cysteine + S-ubiquitinyl-[E2 ubiquitin-conjugating enzyme]-L-cysteine.</text>
        <dbReference type="EC" id="2.3.2.23"/>
    </reaction>
</comment>
<comment type="pathway">
    <text evidence="1">Protein modification; protein ubiquitination.</text>
</comment>
<comment type="subunit">
    <text evidence="3 5 7 8 9">Interacts with RNF19A, RNF19B and RNF144B. Interacts with FLT3 (tyrosine phosphorylated).</text>
</comment>
<comment type="interaction">
    <interactant intactId="EBI-2129974">
        <id>O14933</id>
    </interactant>
    <interactant intactId="EBI-711158">
        <id>O95376</id>
        <label>ARIH2</label>
    </interactant>
    <organismsDiffer>false</organismsDiffer>
    <experiments>14</experiments>
</comment>
<comment type="interaction">
    <interactant intactId="EBI-2129974">
        <id>O14933</id>
    </interactant>
    <interactant intactId="EBI-2340258">
        <id>Q8N9I9</id>
        <label>DTX3</label>
    </interactant>
    <organismsDiffer>false</organismsDiffer>
    <experiments>6</experiments>
</comment>
<comment type="interaction">
    <interactant intactId="EBI-2129974">
        <id>O14933</id>
    </interactant>
    <interactant intactId="EBI-356942">
        <id>P62879</id>
        <label>GNB2</label>
    </interactant>
    <organismsDiffer>false</organismsDiffer>
    <experiments>3</experiments>
</comment>
<comment type="interaction">
    <interactant intactId="EBI-2129974">
        <id>O14933</id>
    </interactant>
    <interactant intactId="EBI-725647">
        <id>Q99732</id>
        <label>LITAF</label>
    </interactant>
    <organismsDiffer>false</organismsDiffer>
    <experiments>3</experiments>
</comment>
<comment type="interaction">
    <interactant intactId="EBI-2129974">
        <id>O14933</id>
    </interactant>
    <interactant intactId="EBI-2341787">
        <id>Q17RB8</id>
        <label>LONRF1</label>
    </interactant>
    <organismsDiffer>false</organismsDiffer>
    <experiments>7</experiments>
</comment>
<comment type="interaction">
    <interactant intactId="EBI-2129974">
        <id>O14933</id>
    </interactant>
    <interactant intactId="EBI-2340316">
        <id>O15344</id>
        <label>MID1</label>
    </interactant>
    <organismsDiffer>false</organismsDiffer>
    <experiments>3</experiments>
</comment>
<comment type="interaction">
    <interactant intactId="EBI-2129974">
        <id>O14933</id>
    </interactant>
    <interactant intactId="EBI-2340624">
        <id>Q9BYM8</id>
        <label>RBCK1</label>
    </interactant>
    <organismsDiffer>false</organismsDiffer>
    <experiments>7</experiments>
</comment>
<comment type="interaction">
    <interactant intactId="EBI-2129974">
        <id>O14933</id>
    </interactant>
    <interactant intactId="EBI-2129982">
        <id>Q7Z419</id>
        <label>RNF144B</label>
    </interactant>
    <organismsDiffer>false</organismsDiffer>
    <experiments>4</experiments>
</comment>
<comment type="interaction">
    <interactant intactId="EBI-2129974">
        <id>O14933</id>
    </interactant>
    <interactant intactId="EBI-2466594">
        <id>Q6ZMZ0</id>
        <label>RNF19B</label>
    </interactant>
    <organismsDiffer>false</organismsDiffer>
    <experiments>3</experiments>
</comment>
<comment type="interaction">
    <interactant intactId="EBI-2129974">
        <id>O14933</id>
    </interactant>
    <interactant intactId="EBI-723313">
        <id>Q9NWF9</id>
        <label>RNF216</label>
    </interactant>
    <organismsDiffer>false</organismsDiffer>
    <experiments>3</experiments>
</comment>
<comment type="interaction">
    <interactant intactId="EBI-2129974">
        <id>O14933</id>
    </interactant>
    <interactant intactId="EBI-6929619">
        <id>Q9BVG3</id>
        <label>TRIM62</label>
    </interactant>
    <organismsDiffer>false</organismsDiffer>
    <experiments>3</experiments>
</comment>
<comment type="interaction">
    <interactant intactId="EBI-2129974">
        <id>O14933</id>
    </interactant>
    <interactant intactId="EBI-2340370">
        <id>Q9BZR9</id>
        <label>TRIM8</label>
    </interactant>
    <organismsDiffer>false</organismsDiffer>
    <experiments>4</experiments>
</comment>
<comment type="interaction">
    <interactant intactId="EBI-2129974">
        <id>O14933</id>
    </interactant>
    <interactant intactId="EBI-9316527">
        <id>Q99PZ6</id>
        <label>ospG</label>
    </interactant>
    <organismsDiffer>true</organismsDiffer>
    <experiments>2</experiments>
</comment>
<comment type="interaction">
    <interactant intactId="EBI-2129974">
        <id>O14933</id>
    </interactant>
    <interactant intactId="EBI-6110162">
        <id>Q8CJB9</id>
        <label>Rnf40</label>
    </interactant>
    <organismsDiffer>true</organismsDiffer>
    <experiments>2</experiments>
</comment>
<comment type="alternative products">
    <event type="alternative splicing"/>
    <isoform>
        <id>O14933-1</id>
        <name>1</name>
        <sequence type="displayed"/>
    </isoform>
    <isoform>
        <id>O14933-2</id>
        <name>2</name>
        <sequence type="described" ref="VSP_037344"/>
    </isoform>
</comment>
<comment type="tissue specificity">
    <text evidence="7">Present in natural killer cells (at protein level).</text>
</comment>
<comment type="induction">
    <text evidence="4">By IFNB1/IFN-beta.</text>
</comment>
<comment type="PTM">
    <text evidence="6">ISGylated.</text>
</comment>
<comment type="similarity">
    <text evidence="1">Belongs to the ubiquitin-conjugating enzyme family.</text>
</comment>
<comment type="sequence caution" evidence="11">
    <conflict type="erroneous initiation">
        <sequence resource="EMBL-CDS" id="CAB64566"/>
    </conflict>
</comment>
<accession>O14933</accession>
<accession>A6NDM6</accession>
<accession>A8MY53</accession>
<accession>Q8N5D8</accession>
<accession>Q9UEZ0</accession>
<gene>
    <name type="primary">UBE2L6</name>
    <name type="synonym">UBCH8</name>
</gene>
<evidence type="ECO:0000255" key="1">
    <source>
        <dbReference type="PROSITE-ProRule" id="PRU00388"/>
    </source>
</evidence>
<evidence type="ECO:0000255" key="2">
    <source>
        <dbReference type="PROSITE-ProRule" id="PRU10133"/>
    </source>
</evidence>
<evidence type="ECO:0000269" key="3">
    <source>
    </source>
</evidence>
<evidence type="ECO:0000269" key="4">
    <source>
    </source>
</evidence>
<evidence type="ECO:0000269" key="5">
    <source>
    </source>
</evidence>
<evidence type="ECO:0000269" key="6">
    <source>
    </source>
</evidence>
<evidence type="ECO:0000269" key="7">
    <source>
    </source>
</evidence>
<evidence type="ECO:0000269" key="8">
    <source>
    </source>
</evidence>
<evidence type="ECO:0000269" key="9">
    <source>
    </source>
</evidence>
<evidence type="ECO:0000303" key="10">
    <source ref="5"/>
</evidence>
<evidence type="ECO:0000305" key="11"/>
<evidence type="ECO:0007829" key="12">
    <source>
        <dbReference type="PDB" id="1WZV"/>
    </source>
</evidence>
<evidence type="ECO:0007829" key="13">
    <source>
        <dbReference type="PDB" id="8OIF"/>
    </source>
</evidence>
<evidence type="ECO:0007829" key="14">
    <source>
        <dbReference type="PDB" id="8SV8"/>
    </source>
</evidence>
<feature type="chain" id="PRO_0000082478" description="Ubiquitin/ISG15-conjugating enzyme E2 L6">
    <location>
        <begin position="1"/>
        <end position="153"/>
    </location>
</feature>
<feature type="domain" description="UBC core" evidence="1">
    <location>
        <begin position="2"/>
        <end position="149"/>
    </location>
</feature>
<feature type="active site" description="Glycyl thioester intermediate" evidence="1 2">
    <location>
        <position position="86"/>
    </location>
</feature>
<feature type="splice variant" id="VSP_037344" description="In isoform 2." evidence="10">
    <location>
        <begin position="1"/>
        <end position="66"/>
    </location>
</feature>
<feature type="helix" evidence="12">
    <location>
        <begin position="4"/>
        <end position="16"/>
    </location>
</feature>
<feature type="strand" evidence="12">
    <location>
        <begin position="22"/>
        <end position="27"/>
    </location>
</feature>
<feature type="strand" evidence="12">
    <location>
        <begin position="34"/>
        <end position="39"/>
    </location>
</feature>
<feature type="helix" evidence="12">
    <location>
        <begin position="46"/>
        <end position="48"/>
    </location>
</feature>
<feature type="strand" evidence="12">
    <location>
        <begin position="49"/>
        <end position="56"/>
    </location>
</feature>
<feature type="turn" evidence="12">
    <location>
        <begin position="59"/>
        <end position="62"/>
    </location>
</feature>
<feature type="strand" evidence="12">
    <location>
        <begin position="67"/>
        <end position="72"/>
    </location>
</feature>
<feature type="strand" evidence="13">
    <location>
        <begin position="81"/>
        <end position="83"/>
    </location>
</feature>
<feature type="helix" evidence="12">
    <location>
        <begin position="88"/>
        <end position="90"/>
    </location>
</feature>
<feature type="turn" evidence="12">
    <location>
        <begin position="92"/>
        <end position="94"/>
    </location>
</feature>
<feature type="strand" evidence="14">
    <location>
        <begin position="97"/>
        <end position="99"/>
    </location>
</feature>
<feature type="helix" evidence="12">
    <location>
        <begin position="101"/>
        <end position="113"/>
    </location>
</feature>
<feature type="strand" evidence="12">
    <location>
        <begin position="117"/>
        <end position="119"/>
    </location>
</feature>
<feature type="helix" evidence="12">
    <location>
        <begin position="123"/>
        <end position="131"/>
    </location>
</feature>
<feature type="helix" evidence="12">
    <location>
        <begin position="133"/>
        <end position="147"/>
    </location>
</feature>
<proteinExistence type="evidence at protein level"/>
<sequence length="153" mass="17769">MMASMRVVKELEDLQKKPPPYLRNLSSDDANVLVWHALLLPDQPPYHLKAFNLRISFPPEYPFKPPMIKFTTKIYHPNVDENGQICLPIISSENWKPCTKTCQVLEALNVLVNRPNIREPLRMDLADLLTQNPELFRKNAEEFTLRFGVDRPS</sequence>
<protein>
    <recommendedName>
        <fullName>Ubiquitin/ISG15-conjugating enzyme E2 L6</fullName>
        <ecNumber>2.3.2.23</ecNumber>
    </recommendedName>
    <alternativeName>
        <fullName>E2 ubiquitin-conjugating enzyme L6</fullName>
    </alternativeName>
    <alternativeName>
        <fullName>Retinoic acid-induced gene B protein</fullName>
        <shortName>RIG-B</shortName>
    </alternativeName>
    <alternativeName>
        <fullName>UbcH8</fullName>
    </alternativeName>
    <alternativeName>
        <fullName>Ubiquitin carrier protein L6</fullName>
    </alternativeName>
    <alternativeName>
        <fullName>Ubiquitin-protein ligase L6</fullName>
    </alternativeName>
</protein>
<name>UB2L6_HUMAN</name>
<dbReference type="EC" id="2.3.2.23"/>
<dbReference type="EMBL" id="AJ243268">
    <property type="protein sequence ID" value="CAB64566.1"/>
    <property type="status" value="ALT_INIT"/>
    <property type="molecule type" value="Genomic_DNA"/>
</dbReference>
<dbReference type="EMBL" id="AJ243269">
    <property type="protein sequence ID" value="CAB64566.1"/>
    <property type="status" value="JOINED"/>
    <property type="molecule type" value="Genomic_DNA"/>
</dbReference>
<dbReference type="EMBL" id="AJ243270">
    <property type="protein sequence ID" value="CAB64566.1"/>
    <property type="status" value="JOINED"/>
    <property type="molecule type" value="Genomic_DNA"/>
</dbReference>
<dbReference type="EMBL" id="AJ243271">
    <property type="protein sequence ID" value="CAB64566.1"/>
    <property type="status" value="JOINED"/>
    <property type="molecule type" value="Genomic_DNA"/>
</dbReference>
<dbReference type="EMBL" id="AF061736">
    <property type="protein sequence ID" value="AAD17525.1"/>
    <property type="molecule type" value="mRNA"/>
</dbReference>
<dbReference type="EMBL" id="AK315755">
    <property type="protein sequence ID" value="BAG38109.1"/>
    <property type="molecule type" value="mRNA"/>
</dbReference>
<dbReference type="EMBL" id="CR457126">
    <property type="protein sequence ID" value="CAG33407.1"/>
    <property type="molecule type" value="mRNA"/>
</dbReference>
<dbReference type="EMBL" id="AK226165">
    <property type="status" value="NOT_ANNOTATED_CDS"/>
    <property type="molecule type" value="mRNA"/>
</dbReference>
<dbReference type="EMBL" id="AP002893">
    <property type="status" value="NOT_ANNOTATED_CDS"/>
    <property type="molecule type" value="Genomic_DNA"/>
</dbReference>
<dbReference type="EMBL" id="CH471076">
    <property type="protein sequence ID" value="EAW73757.1"/>
    <property type="molecule type" value="Genomic_DNA"/>
</dbReference>
<dbReference type="EMBL" id="CH471076">
    <property type="protein sequence ID" value="EAW73759.1"/>
    <property type="molecule type" value="Genomic_DNA"/>
</dbReference>
<dbReference type="EMBL" id="BC032491">
    <property type="protein sequence ID" value="AAH32491.1"/>
    <property type="molecule type" value="mRNA"/>
</dbReference>
<dbReference type="EMBL" id="AF031141">
    <property type="protein sequence ID" value="AAB86433.1"/>
    <property type="molecule type" value="mRNA"/>
</dbReference>
<dbReference type="CCDS" id="CCDS7960.1">
    <molecule id="O14933-1"/>
</dbReference>
<dbReference type="CCDS" id="CCDS7961.1">
    <molecule id="O14933-2"/>
</dbReference>
<dbReference type="RefSeq" id="NP_004214.1">
    <molecule id="O14933-1"/>
    <property type="nucleotide sequence ID" value="NM_004223.5"/>
</dbReference>
<dbReference type="RefSeq" id="NP_937826.1">
    <molecule id="O14933-2"/>
    <property type="nucleotide sequence ID" value="NM_198183.3"/>
</dbReference>
<dbReference type="PDB" id="1WZV">
    <property type="method" value="X-ray"/>
    <property type="resolution" value="2.10 A"/>
    <property type="chains" value="A/B=2-153"/>
</dbReference>
<dbReference type="PDB" id="1WZW">
    <property type="method" value="X-ray"/>
    <property type="resolution" value="2.40 A"/>
    <property type="chains" value="A=2-153"/>
</dbReference>
<dbReference type="PDB" id="2KJH">
    <property type="method" value="NMR"/>
    <property type="chains" value="A=2-153"/>
</dbReference>
<dbReference type="PDB" id="8OIF">
    <property type="method" value="EM"/>
    <property type="resolution" value="3.50 A"/>
    <property type="chains" value="L=1-153"/>
</dbReference>
<dbReference type="PDB" id="8SE9">
    <property type="method" value="EM"/>
    <property type="resolution" value="3.20 A"/>
    <property type="chains" value="C=2-153"/>
</dbReference>
<dbReference type="PDB" id="8SEA">
    <property type="method" value="EM"/>
    <property type="resolution" value="3.40 A"/>
    <property type="chains" value="C=2-153"/>
</dbReference>
<dbReference type="PDB" id="8SEB">
    <property type="method" value="EM"/>
    <property type="resolution" value="3.24 A"/>
    <property type="chains" value="C=2-153"/>
</dbReference>
<dbReference type="PDB" id="8SV8">
    <property type="method" value="EM"/>
    <property type="resolution" value="3.38 A"/>
    <property type="chains" value="C=2-153"/>
</dbReference>
<dbReference type="PDBsum" id="1WZV"/>
<dbReference type="PDBsum" id="1WZW"/>
<dbReference type="PDBsum" id="2KJH"/>
<dbReference type="PDBsum" id="8OIF"/>
<dbReference type="PDBsum" id="8SE9"/>
<dbReference type="PDBsum" id="8SEA"/>
<dbReference type="PDBsum" id="8SEB"/>
<dbReference type="PDBsum" id="8SV8"/>
<dbReference type="BMRB" id="O14933"/>
<dbReference type="EMDB" id="EMD-16891"/>
<dbReference type="EMDB" id="EMD-18589"/>
<dbReference type="EMDB" id="EMD-40407"/>
<dbReference type="EMDB" id="EMD-40408"/>
<dbReference type="EMDB" id="EMD-40409"/>
<dbReference type="EMDB" id="EMD-40782"/>
<dbReference type="SMR" id="O14933"/>
<dbReference type="BioGRID" id="114672">
    <property type="interactions" value="120"/>
</dbReference>
<dbReference type="DIP" id="DIP-41477N"/>
<dbReference type="FunCoup" id="O14933">
    <property type="interactions" value="435"/>
</dbReference>
<dbReference type="IntAct" id="O14933">
    <property type="interactions" value="38"/>
</dbReference>
<dbReference type="MINT" id="O14933"/>
<dbReference type="STRING" id="9606.ENSP00000287156"/>
<dbReference type="iPTMnet" id="O14933"/>
<dbReference type="MetOSite" id="O14933"/>
<dbReference type="PhosphoSitePlus" id="O14933"/>
<dbReference type="SwissPalm" id="O14933"/>
<dbReference type="BioMuta" id="UBE2L6"/>
<dbReference type="jPOST" id="O14933"/>
<dbReference type="MassIVE" id="O14933"/>
<dbReference type="PaxDb" id="9606-ENSP00000287156"/>
<dbReference type="PeptideAtlas" id="O14933"/>
<dbReference type="ProteomicsDB" id="48316">
    <molecule id="O14933-1"/>
</dbReference>
<dbReference type="ProteomicsDB" id="48317">
    <molecule id="O14933-2"/>
</dbReference>
<dbReference type="Pumba" id="O14933"/>
<dbReference type="Antibodypedia" id="1142">
    <property type="antibodies" value="357 antibodies from 34 providers"/>
</dbReference>
<dbReference type="CPTC" id="O14933">
    <property type="antibodies" value="3 antibodies"/>
</dbReference>
<dbReference type="DNASU" id="9246"/>
<dbReference type="Ensembl" id="ENST00000287156.9">
    <molecule id="O14933-1"/>
    <property type="protein sequence ID" value="ENSP00000287156.4"/>
    <property type="gene ID" value="ENSG00000156587.16"/>
</dbReference>
<dbReference type="Ensembl" id="ENST00000340573.8">
    <molecule id="O14933-2"/>
    <property type="protein sequence ID" value="ENSP00000341980.4"/>
    <property type="gene ID" value="ENSG00000156587.16"/>
</dbReference>
<dbReference type="GeneID" id="9246"/>
<dbReference type="KEGG" id="hsa:9246"/>
<dbReference type="MANE-Select" id="ENST00000287156.9">
    <property type="protein sequence ID" value="ENSP00000287156.4"/>
    <property type="RefSeq nucleotide sequence ID" value="NM_004223.5"/>
    <property type="RefSeq protein sequence ID" value="NP_004214.1"/>
</dbReference>
<dbReference type="UCSC" id="uc001nkn.3">
    <molecule id="O14933-1"/>
    <property type="organism name" value="human"/>
</dbReference>
<dbReference type="AGR" id="HGNC:12490"/>
<dbReference type="CTD" id="9246"/>
<dbReference type="DisGeNET" id="9246"/>
<dbReference type="GeneCards" id="UBE2L6"/>
<dbReference type="HGNC" id="HGNC:12490">
    <property type="gene designation" value="UBE2L6"/>
</dbReference>
<dbReference type="HPA" id="ENSG00000156587">
    <property type="expression patterns" value="Low tissue specificity"/>
</dbReference>
<dbReference type="MIM" id="603890">
    <property type="type" value="gene"/>
</dbReference>
<dbReference type="neXtProt" id="NX_O14933"/>
<dbReference type="OpenTargets" id="ENSG00000156587"/>
<dbReference type="PharmGKB" id="PA37139"/>
<dbReference type="VEuPathDB" id="HostDB:ENSG00000156587"/>
<dbReference type="eggNOG" id="KOG0422">
    <property type="taxonomic scope" value="Eukaryota"/>
</dbReference>
<dbReference type="GeneTree" id="ENSGT00940000161981"/>
<dbReference type="HOGENOM" id="CLU_030988_13_3_1"/>
<dbReference type="InParanoid" id="O14933"/>
<dbReference type="OMA" id="PPYNLRA"/>
<dbReference type="OrthoDB" id="9973183at2759"/>
<dbReference type="PAN-GO" id="O14933">
    <property type="GO annotations" value="8 GO annotations based on evolutionary models"/>
</dbReference>
<dbReference type="PhylomeDB" id="O14933"/>
<dbReference type="TreeFam" id="TF313043"/>
<dbReference type="BRENDA" id="2.3.2.23">
    <property type="organism ID" value="2681"/>
</dbReference>
<dbReference type="PathwayCommons" id="O14933"/>
<dbReference type="Reactome" id="R-HSA-1169408">
    <property type="pathway name" value="ISG15 antiviral mechanism"/>
</dbReference>
<dbReference type="Reactome" id="R-HSA-168928">
    <property type="pathway name" value="DDX58/IFIH1-mediated induction of interferon-alpha/beta"/>
</dbReference>
<dbReference type="Reactome" id="R-HSA-5656169">
    <property type="pathway name" value="Termination of translesion DNA synthesis"/>
</dbReference>
<dbReference type="Reactome" id="R-HSA-936440">
    <property type="pathway name" value="Negative regulators of DDX58/IFIH1 signaling"/>
</dbReference>
<dbReference type="Reactome" id="R-HSA-977225">
    <property type="pathway name" value="Amyloid fiber formation"/>
</dbReference>
<dbReference type="Reactome" id="R-HSA-983168">
    <property type="pathway name" value="Antigen processing: Ubiquitination &amp; Proteasome degradation"/>
</dbReference>
<dbReference type="Reactome" id="R-HSA-9833110">
    <property type="pathway name" value="RSV-host interactions"/>
</dbReference>
<dbReference type="Reactome" id="R-HSA-9833482">
    <property type="pathway name" value="PKR-mediated signaling"/>
</dbReference>
<dbReference type="Reactome" id="R-HSA-9909505">
    <property type="pathway name" value="Modulation of host responses by IFN-stimulated genes"/>
</dbReference>
<dbReference type="SignaLink" id="O14933"/>
<dbReference type="SIGNOR" id="O14933"/>
<dbReference type="UniPathway" id="UPA00143"/>
<dbReference type="BioGRID-ORCS" id="9246">
    <property type="hits" value="19 hits in 1168 CRISPR screens"/>
</dbReference>
<dbReference type="ChiTaRS" id="UBE2L6">
    <property type="organism name" value="human"/>
</dbReference>
<dbReference type="EvolutionaryTrace" id="O14933"/>
<dbReference type="GeneWiki" id="UBE2L6"/>
<dbReference type="GenomeRNAi" id="9246"/>
<dbReference type="Pharos" id="O14933">
    <property type="development level" value="Tbio"/>
</dbReference>
<dbReference type="PRO" id="PR:O14933"/>
<dbReference type="Proteomes" id="UP000005640">
    <property type="component" value="Chromosome 11"/>
</dbReference>
<dbReference type="RNAct" id="O14933">
    <property type="molecule type" value="protein"/>
</dbReference>
<dbReference type="Bgee" id="ENSG00000156587">
    <property type="expression patterns" value="Expressed in granulocyte and 202 other cell types or tissues"/>
</dbReference>
<dbReference type="ExpressionAtlas" id="O14933">
    <property type="expression patterns" value="baseline and differential"/>
</dbReference>
<dbReference type="GO" id="GO:0005737">
    <property type="term" value="C:cytoplasm"/>
    <property type="evidence" value="ECO:0000305"/>
    <property type="project" value="UniProt"/>
</dbReference>
<dbReference type="GO" id="GO:0005829">
    <property type="term" value="C:cytosol"/>
    <property type="evidence" value="ECO:0000304"/>
    <property type="project" value="Reactome"/>
</dbReference>
<dbReference type="GO" id="GO:0005654">
    <property type="term" value="C:nucleoplasm"/>
    <property type="evidence" value="ECO:0000304"/>
    <property type="project" value="Reactome"/>
</dbReference>
<dbReference type="GO" id="GO:0005634">
    <property type="term" value="C:nucleus"/>
    <property type="evidence" value="ECO:0000318"/>
    <property type="project" value="GO_Central"/>
</dbReference>
<dbReference type="GO" id="GO:0042296">
    <property type="term" value="F:ISG15 transferase activity"/>
    <property type="evidence" value="ECO:0000314"/>
    <property type="project" value="UniProt"/>
</dbReference>
<dbReference type="GO" id="GO:0043130">
    <property type="term" value="F:ubiquitin binding"/>
    <property type="evidence" value="ECO:0000269"/>
    <property type="project" value="Reactome"/>
</dbReference>
<dbReference type="GO" id="GO:0061631">
    <property type="term" value="F:ubiquitin conjugating enzyme activity"/>
    <property type="evidence" value="ECO:0000318"/>
    <property type="project" value="GO_Central"/>
</dbReference>
<dbReference type="GO" id="GO:0004842">
    <property type="term" value="F:ubiquitin-protein transferase activity"/>
    <property type="evidence" value="ECO:0000304"/>
    <property type="project" value="ProtInc"/>
</dbReference>
<dbReference type="GO" id="GO:0045087">
    <property type="term" value="P:innate immune response"/>
    <property type="evidence" value="ECO:0000314"/>
    <property type="project" value="UniProt"/>
</dbReference>
<dbReference type="GO" id="GO:0032020">
    <property type="term" value="P:ISG15-protein conjugation"/>
    <property type="evidence" value="ECO:0000314"/>
    <property type="project" value="UniProt"/>
</dbReference>
<dbReference type="GO" id="GO:0036211">
    <property type="term" value="P:protein modification process"/>
    <property type="evidence" value="ECO:0000304"/>
    <property type="project" value="ProtInc"/>
</dbReference>
<dbReference type="GO" id="GO:0000209">
    <property type="term" value="P:protein polyubiquitination"/>
    <property type="evidence" value="ECO:0000318"/>
    <property type="project" value="GO_Central"/>
</dbReference>
<dbReference type="GO" id="GO:0006511">
    <property type="term" value="P:ubiquitin-dependent protein catabolic process"/>
    <property type="evidence" value="ECO:0000318"/>
    <property type="project" value="GO_Central"/>
</dbReference>
<dbReference type="CDD" id="cd23801">
    <property type="entry name" value="UBCc_UBE2L3"/>
    <property type="match status" value="1"/>
</dbReference>
<dbReference type="FunFam" id="3.10.110.10:FF:000011">
    <property type="entry name" value="Ubiquitin-conjugating enzyme E2 L3"/>
    <property type="match status" value="1"/>
</dbReference>
<dbReference type="Gene3D" id="3.10.110.10">
    <property type="entry name" value="Ubiquitin Conjugating Enzyme"/>
    <property type="match status" value="1"/>
</dbReference>
<dbReference type="InterPro" id="IPR050113">
    <property type="entry name" value="Ub_conjugating_enzyme"/>
</dbReference>
<dbReference type="InterPro" id="IPR000608">
    <property type="entry name" value="UBQ-conjugat_E2_core"/>
</dbReference>
<dbReference type="InterPro" id="IPR023313">
    <property type="entry name" value="UBQ-conjugating_AS"/>
</dbReference>
<dbReference type="InterPro" id="IPR016135">
    <property type="entry name" value="UBQ-conjugating_enzyme/RWD"/>
</dbReference>
<dbReference type="PANTHER" id="PTHR24067">
    <property type="entry name" value="UBIQUITIN-CONJUGATING ENZYME E2"/>
    <property type="match status" value="1"/>
</dbReference>
<dbReference type="Pfam" id="PF00179">
    <property type="entry name" value="UQ_con"/>
    <property type="match status" value="1"/>
</dbReference>
<dbReference type="SMART" id="SM00212">
    <property type="entry name" value="UBCc"/>
    <property type="match status" value="1"/>
</dbReference>
<dbReference type="SUPFAM" id="SSF54495">
    <property type="entry name" value="UBC-like"/>
    <property type="match status" value="1"/>
</dbReference>
<dbReference type="PROSITE" id="PS00183">
    <property type="entry name" value="UBC_1"/>
    <property type="match status" value="1"/>
</dbReference>
<dbReference type="PROSITE" id="PS50127">
    <property type="entry name" value="UBC_2"/>
    <property type="match status" value="1"/>
</dbReference>
<organism>
    <name type="scientific">Homo sapiens</name>
    <name type="common">Human</name>
    <dbReference type="NCBI Taxonomy" id="9606"/>
    <lineage>
        <taxon>Eukaryota</taxon>
        <taxon>Metazoa</taxon>
        <taxon>Chordata</taxon>
        <taxon>Craniata</taxon>
        <taxon>Vertebrata</taxon>
        <taxon>Euteleostomi</taxon>
        <taxon>Mammalia</taxon>
        <taxon>Eutheria</taxon>
        <taxon>Euarchontoglires</taxon>
        <taxon>Primates</taxon>
        <taxon>Haplorrhini</taxon>
        <taxon>Catarrhini</taxon>
        <taxon>Hominidae</taxon>
        <taxon>Homo</taxon>
    </lineage>
</organism>
<reference key="1">
    <citation type="journal article" date="2000" name="Cytogenet. Cell Genet.">
        <title>Genomic organization of the human ubiquitin-conjugating enzyme gene, UBE2L6 on chromosome 11q12.</title>
        <authorList>
            <person name="Ardley H.C."/>
            <person name="Rose S.A."/>
            <person name="Tan N."/>
            <person name="Leek J.P."/>
            <person name="Markham A.F."/>
            <person name="Robinson P.A."/>
        </authorList>
    </citation>
    <scope>NUCLEOTIDE SEQUENCE [GENOMIC DNA / MRNA] (ISOFORM 1)</scope>
</reference>
<reference key="2">
    <citation type="submission" date="1998-04" db="EMBL/GenBank/DDBJ databases">
        <title>Human retinoic acid induced gene B (RIG-B) mRNA.</title>
        <authorList>
            <person name="Liu T."/>
            <person name="Mao M."/>
            <person name="Zhang J."/>
            <person name="Wu J."/>
            <person name="Zhang Q."/>
            <person name="Fu G."/>
            <person name="Shen Y."/>
            <person name="Zhou J."/>
            <person name="Yu Y."/>
            <person name="Wang Z."/>
            <person name="Chen S."/>
            <person name="Chen Z."/>
        </authorList>
    </citation>
    <scope>NUCLEOTIDE SEQUENCE [MRNA] (ISOFORM 1)</scope>
</reference>
<reference key="3">
    <citation type="journal article" date="2004" name="Nat. Genet.">
        <title>Complete sequencing and characterization of 21,243 full-length human cDNAs.</title>
        <authorList>
            <person name="Ota T."/>
            <person name="Suzuki Y."/>
            <person name="Nishikawa T."/>
            <person name="Otsuki T."/>
            <person name="Sugiyama T."/>
            <person name="Irie R."/>
            <person name="Wakamatsu A."/>
            <person name="Hayashi K."/>
            <person name="Sato H."/>
            <person name="Nagai K."/>
            <person name="Kimura K."/>
            <person name="Makita H."/>
            <person name="Sekine M."/>
            <person name="Obayashi M."/>
            <person name="Nishi T."/>
            <person name="Shibahara T."/>
            <person name="Tanaka T."/>
            <person name="Ishii S."/>
            <person name="Yamamoto J."/>
            <person name="Saito K."/>
            <person name="Kawai Y."/>
            <person name="Isono Y."/>
            <person name="Nakamura Y."/>
            <person name="Nagahari K."/>
            <person name="Murakami K."/>
            <person name="Yasuda T."/>
            <person name="Iwayanagi T."/>
            <person name="Wagatsuma M."/>
            <person name="Shiratori A."/>
            <person name="Sudo H."/>
            <person name="Hosoiri T."/>
            <person name="Kaku Y."/>
            <person name="Kodaira H."/>
            <person name="Kondo H."/>
            <person name="Sugawara M."/>
            <person name="Takahashi M."/>
            <person name="Kanda K."/>
            <person name="Yokoi T."/>
            <person name="Furuya T."/>
            <person name="Kikkawa E."/>
            <person name="Omura Y."/>
            <person name="Abe K."/>
            <person name="Kamihara K."/>
            <person name="Katsuta N."/>
            <person name="Sato K."/>
            <person name="Tanikawa M."/>
            <person name="Yamazaki M."/>
            <person name="Ninomiya K."/>
            <person name="Ishibashi T."/>
            <person name="Yamashita H."/>
            <person name="Murakawa K."/>
            <person name="Fujimori K."/>
            <person name="Tanai H."/>
            <person name="Kimata M."/>
            <person name="Watanabe M."/>
            <person name="Hiraoka S."/>
            <person name="Chiba Y."/>
            <person name="Ishida S."/>
            <person name="Ono Y."/>
            <person name="Takiguchi S."/>
            <person name="Watanabe S."/>
            <person name="Yosida M."/>
            <person name="Hotuta T."/>
            <person name="Kusano J."/>
            <person name="Kanehori K."/>
            <person name="Takahashi-Fujii A."/>
            <person name="Hara H."/>
            <person name="Tanase T.-O."/>
            <person name="Nomura Y."/>
            <person name="Togiya S."/>
            <person name="Komai F."/>
            <person name="Hara R."/>
            <person name="Takeuchi K."/>
            <person name="Arita M."/>
            <person name="Imose N."/>
            <person name="Musashino K."/>
            <person name="Yuuki H."/>
            <person name="Oshima A."/>
            <person name="Sasaki N."/>
            <person name="Aotsuka S."/>
            <person name="Yoshikawa Y."/>
            <person name="Matsunawa H."/>
            <person name="Ichihara T."/>
            <person name="Shiohata N."/>
            <person name="Sano S."/>
            <person name="Moriya S."/>
            <person name="Momiyama H."/>
            <person name="Satoh N."/>
            <person name="Takami S."/>
            <person name="Terashima Y."/>
            <person name="Suzuki O."/>
            <person name="Nakagawa S."/>
            <person name="Senoh A."/>
            <person name="Mizoguchi H."/>
            <person name="Goto Y."/>
            <person name="Shimizu F."/>
            <person name="Wakebe H."/>
            <person name="Hishigaki H."/>
            <person name="Watanabe T."/>
            <person name="Sugiyama A."/>
            <person name="Takemoto M."/>
            <person name="Kawakami B."/>
            <person name="Yamazaki M."/>
            <person name="Watanabe K."/>
            <person name="Kumagai A."/>
            <person name="Itakura S."/>
            <person name="Fukuzumi Y."/>
            <person name="Fujimori Y."/>
            <person name="Komiyama M."/>
            <person name="Tashiro H."/>
            <person name="Tanigami A."/>
            <person name="Fujiwara T."/>
            <person name="Ono T."/>
            <person name="Yamada K."/>
            <person name="Fujii Y."/>
            <person name="Ozaki K."/>
            <person name="Hirao M."/>
            <person name="Ohmori Y."/>
            <person name="Kawabata A."/>
            <person name="Hikiji T."/>
            <person name="Kobatake N."/>
            <person name="Inagaki H."/>
            <person name="Ikema Y."/>
            <person name="Okamoto S."/>
            <person name="Okitani R."/>
            <person name="Kawakami T."/>
            <person name="Noguchi S."/>
            <person name="Itoh T."/>
            <person name="Shigeta K."/>
            <person name="Senba T."/>
            <person name="Matsumura K."/>
            <person name="Nakajima Y."/>
            <person name="Mizuno T."/>
            <person name="Morinaga M."/>
            <person name="Sasaki M."/>
            <person name="Togashi T."/>
            <person name="Oyama M."/>
            <person name="Hata H."/>
            <person name="Watanabe M."/>
            <person name="Komatsu T."/>
            <person name="Mizushima-Sugano J."/>
            <person name="Satoh T."/>
            <person name="Shirai Y."/>
            <person name="Takahashi Y."/>
            <person name="Nakagawa K."/>
            <person name="Okumura K."/>
            <person name="Nagase T."/>
            <person name="Nomura N."/>
            <person name="Kikuchi H."/>
            <person name="Masuho Y."/>
            <person name="Yamashita R."/>
            <person name="Nakai K."/>
            <person name="Yada T."/>
            <person name="Nakamura Y."/>
            <person name="Ohara O."/>
            <person name="Isogai T."/>
            <person name="Sugano S."/>
        </authorList>
    </citation>
    <scope>NUCLEOTIDE SEQUENCE [LARGE SCALE MRNA] (ISOFORM 1)</scope>
    <source>
        <tissue>Thymus</tissue>
    </source>
</reference>
<reference key="4">
    <citation type="submission" date="2004-06" db="EMBL/GenBank/DDBJ databases">
        <title>Cloning of human full open reading frames in Gateway(TM) system entry vector (pDONR201).</title>
        <authorList>
            <person name="Ebert L."/>
            <person name="Schick M."/>
            <person name="Neubert P."/>
            <person name="Schatten R."/>
            <person name="Henze S."/>
            <person name="Korn B."/>
        </authorList>
    </citation>
    <scope>NUCLEOTIDE SEQUENCE [LARGE SCALE MRNA] (ISOFORM 1)</scope>
</reference>
<reference key="5">
    <citation type="submission" date="2006-07" db="EMBL/GenBank/DDBJ databases">
        <authorList>
            <person name="Totoki Y."/>
            <person name="Toyoda A."/>
            <person name="Takeda T."/>
            <person name="Sakaki Y."/>
            <person name="Tanaka A."/>
            <person name="Yokoyama S."/>
            <person name="Ohara O."/>
            <person name="Nagase T."/>
            <person name="Kikuno R.F."/>
        </authorList>
    </citation>
    <scope>NUCLEOTIDE SEQUENCE [LARGE SCALE MRNA] (ISOFORM 2)</scope>
    <source>
        <tissue>Brain</tissue>
    </source>
</reference>
<reference key="6">
    <citation type="journal article" date="2006" name="Nature">
        <title>Human chromosome 11 DNA sequence and analysis including novel gene identification.</title>
        <authorList>
            <person name="Taylor T.D."/>
            <person name="Noguchi H."/>
            <person name="Totoki Y."/>
            <person name="Toyoda A."/>
            <person name="Kuroki Y."/>
            <person name="Dewar K."/>
            <person name="Lloyd C."/>
            <person name="Itoh T."/>
            <person name="Takeda T."/>
            <person name="Kim D.-W."/>
            <person name="She X."/>
            <person name="Barlow K.F."/>
            <person name="Bloom T."/>
            <person name="Bruford E."/>
            <person name="Chang J.L."/>
            <person name="Cuomo C.A."/>
            <person name="Eichler E."/>
            <person name="FitzGerald M.G."/>
            <person name="Jaffe D.B."/>
            <person name="LaButti K."/>
            <person name="Nicol R."/>
            <person name="Park H.-S."/>
            <person name="Seaman C."/>
            <person name="Sougnez C."/>
            <person name="Yang X."/>
            <person name="Zimmer A.R."/>
            <person name="Zody M.C."/>
            <person name="Birren B.W."/>
            <person name="Nusbaum C."/>
            <person name="Fujiyama A."/>
            <person name="Hattori M."/>
            <person name="Rogers J."/>
            <person name="Lander E.S."/>
            <person name="Sakaki Y."/>
        </authorList>
    </citation>
    <scope>NUCLEOTIDE SEQUENCE [LARGE SCALE GENOMIC DNA]</scope>
</reference>
<reference key="7">
    <citation type="submission" date="2005-07" db="EMBL/GenBank/DDBJ databases">
        <authorList>
            <person name="Mural R.J."/>
            <person name="Istrail S."/>
            <person name="Sutton G.G."/>
            <person name="Florea L."/>
            <person name="Halpern A.L."/>
            <person name="Mobarry C.M."/>
            <person name="Lippert R."/>
            <person name="Walenz B."/>
            <person name="Shatkay H."/>
            <person name="Dew I."/>
            <person name="Miller J.R."/>
            <person name="Flanigan M.J."/>
            <person name="Edwards N.J."/>
            <person name="Bolanos R."/>
            <person name="Fasulo D."/>
            <person name="Halldorsson B.V."/>
            <person name="Hannenhalli S."/>
            <person name="Turner R."/>
            <person name="Yooseph S."/>
            <person name="Lu F."/>
            <person name="Nusskern D.R."/>
            <person name="Shue B.C."/>
            <person name="Zheng X.H."/>
            <person name="Zhong F."/>
            <person name="Delcher A.L."/>
            <person name="Huson D.H."/>
            <person name="Kravitz S.A."/>
            <person name="Mouchard L."/>
            <person name="Reinert K."/>
            <person name="Remington K.A."/>
            <person name="Clark A.G."/>
            <person name="Waterman M.S."/>
            <person name="Eichler E.E."/>
            <person name="Adams M.D."/>
            <person name="Hunkapiller M.W."/>
            <person name="Myers E.W."/>
            <person name="Venter J.C."/>
        </authorList>
    </citation>
    <scope>NUCLEOTIDE SEQUENCE [LARGE SCALE GENOMIC DNA]</scope>
</reference>
<reference key="8">
    <citation type="journal article" date="2004" name="Genome Res.">
        <title>The status, quality, and expansion of the NIH full-length cDNA project: the Mammalian Gene Collection (MGC).</title>
        <authorList>
            <consortium name="The MGC Project Team"/>
        </authorList>
    </citation>
    <scope>NUCLEOTIDE SEQUENCE [LARGE SCALE MRNA] (ISOFORM 1)</scope>
    <source>
        <tissue>Brain</tissue>
    </source>
</reference>
<reference key="9">
    <citation type="journal article" date="1997" name="J. Biol. Chem.">
        <title>Physical interaction between specific E2 and Hect E3 enzymes determines functional cooperativity.</title>
        <authorList>
            <person name="Kumar S."/>
            <person name="Kao W.H."/>
            <person name="Howley P.M."/>
        </authorList>
    </citation>
    <scope>NUCLEOTIDE SEQUENCE [MRNA] OF 2-153 (ISOFORM 1)</scope>
</reference>
<reference key="10">
    <citation type="journal article" date="2004" name="Proc. Natl. Acad. Sci. U.S.A.">
        <title>The UbcH8 ubiquitin E2 enzyme is also the E2 enzyme for ISG15, an IFN-alpha/beta-induced ubiquitin-like protein.</title>
        <authorList>
            <person name="Zhao C."/>
            <person name="Beaudenon S.L."/>
            <person name="Kelley M.L."/>
            <person name="Waddell M.B."/>
            <person name="Yuan W."/>
            <person name="Schulman B.A."/>
            <person name="Huibregtse J.M."/>
            <person name="Krug R.M."/>
        </authorList>
    </citation>
    <scope>PROTEIN SEQUENCE OF 140-146</scope>
    <scope>FUNCTION IN ISG15 ATTACHMENT</scope>
    <scope>INDUCTION BY IFNB1</scope>
</reference>
<reference key="11">
    <citation type="journal article" date="2001" name="Biochem. Biophys. Res. Commun.">
        <title>A novel centrosomal ring-finger protein, dorfin, mediates ubiquitin ligase activity.</title>
        <authorList>
            <person name="Niwa J."/>
            <person name="Ishigaki S."/>
            <person name="Doyu M."/>
            <person name="Suzuki T."/>
            <person name="Tanaka K."/>
            <person name="Sobue G."/>
        </authorList>
    </citation>
    <scope>INTERACTION WITH RNF19A</scope>
</reference>
<reference key="12">
    <citation type="journal article" date="2005" name="J. Biochem.">
        <title>Link between the ubiquitin conjugation system and the ISG15 conjugation system: ISG15 conjugation to the UbcH6 ubiquitin E2 enzyme.</title>
        <authorList>
            <person name="Takeuchi T."/>
            <person name="Iwahara S."/>
            <person name="Saeki Y."/>
            <person name="Sasajima H."/>
            <person name="Yokosawa H."/>
        </authorList>
    </citation>
    <scope>FUNCTION</scope>
    <scope>ISGYLATION</scope>
</reference>
<reference key="13">
    <citation type="journal article" date="2006" name="FEBS Lett.">
        <title>The p53-inducible E3 ubiquitin ligase p53RFP induces p53-dependent apoptosis.</title>
        <authorList>
            <person name="Huang J."/>
            <person name="Xu L.-G."/>
            <person name="Liu T."/>
            <person name="Zhai Z."/>
            <person name="Shu H.-B."/>
        </authorList>
    </citation>
    <scope>INTERACTION WITH RNF144B</scope>
</reference>
<reference key="14">
    <citation type="journal article" date="2006" name="J. Immunol.">
        <title>NK lytic-associated molecule, involved in NK cytotoxic function, is an E3 ligase.</title>
        <authorList>
            <person name="Fortier J.M."/>
            <person name="Kornbluth J."/>
        </authorList>
    </citation>
    <scope>INTERACTION WITH RNF19B</scope>
    <scope>TISSUE SPECIFICITY</scope>
</reference>
<reference key="15">
    <citation type="journal article" date="2010" name="Leukemia">
        <title>Ubiquitin conjugase UBCH8 targets active FMS-like tyrosine kinase 3 for proteasomal degradation.</title>
        <authorList>
            <person name="Buchwald M."/>
            <person name="Pietschmann K."/>
            <person name="Muller J.P."/>
            <person name="Bohmer F.D."/>
            <person name="Heinzel T."/>
            <person name="Kramer O.H."/>
        </authorList>
    </citation>
    <scope>FUNCTION IN UBIQUITINATION OF FLT3</scope>
    <scope>INTERACTION WITH FLT3</scope>
</reference>
<reference key="16">
    <citation type="journal article" date="2011" name="BMC Syst. Biol.">
        <title>Initial characterization of the human central proteome.</title>
        <authorList>
            <person name="Burkard T.R."/>
            <person name="Planyavsky M."/>
            <person name="Kaupe I."/>
            <person name="Breitwieser F.P."/>
            <person name="Buerckstuemmer T."/>
            <person name="Bennett K.L."/>
            <person name="Superti-Furga G."/>
            <person name="Colinge J."/>
        </authorList>
    </citation>
    <scope>IDENTIFICATION BY MASS SPECTROMETRY [LARGE SCALE ANALYSIS]</scope>
</reference>
<reference key="17">
    <citation type="journal article" date="2014" name="J. Proteomics">
        <title>An enzyme assisted RP-RPLC approach for in-depth analysis of human liver phosphoproteome.</title>
        <authorList>
            <person name="Bian Y."/>
            <person name="Song C."/>
            <person name="Cheng K."/>
            <person name="Dong M."/>
            <person name="Wang F."/>
            <person name="Huang J."/>
            <person name="Sun D."/>
            <person name="Wang L."/>
            <person name="Ye M."/>
            <person name="Zou H."/>
        </authorList>
    </citation>
    <scope>IDENTIFICATION BY MASS SPECTROMETRY [LARGE SCALE ANALYSIS]</scope>
    <source>
        <tissue>Liver</tissue>
    </source>
</reference>
<reference key="18">
    <citation type="submission" date="2005-03" db="PDB data bank">
        <title>Crystal structure of Ubch8.</title>
        <authorList>
            <person name="Mizushima T."/>
            <person name="Suzuki M."/>
            <person name="Teshima N."/>
            <person name="Yamane T."/>
            <person name="Murata S."/>
            <person name="Tanaka K."/>
        </authorList>
    </citation>
    <scope>X-RAY CRYSTALLOGRAPHY (2.1 ANGSTROMS) OF 2-153</scope>
</reference>
<reference key="19">
    <citation type="journal article" date="2009" name="Biochemistry">
        <title>The structure of the UbcH8-ubiquitin complex shows a unique ubiquitin interaction site.</title>
        <authorList>
            <person name="Serniwka S.A."/>
            <person name="Shaw G.S."/>
        </authorList>
    </citation>
    <scope>STRUCTURE BY NMR IN COMPLEX WITH UBIQUITIN</scope>
</reference>
<keyword id="KW-0002">3D-structure</keyword>
<keyword id="KW-0025">Alternative splicing</keyword>
<keyword id="KW-0903">Direct protein sequencing</keyword>
<keyword id="KW-1267">Proteomics identification</keyword>
<keyword id="KW-1185">Reference proteome</keyword>
<keyword id="KW-0808">Transferase</keyword>
<keyword id="KW-0832">Ubl conjugation</keyword>
<keyword id="KW-0833">Ubl conjugation pathway</keyword>